<keyword id="KW-0002">3D-structure</keyword>
<keyword id="KW-0479">Metal-binding</keyword>
<keyword id="KW-1185">Reference proteome</keyword>
<keyword id="KW-0687">Ribonucleoprotein</keyword>
<keyword id="KW-0689">Ribosomal protein</keyword>
<keyword id="KW-0862">Zinc</keyword>
<keyword id="KW-0863">Zinc-finger</keyword>
<reference key="1">
    <citation type="journal article" date="2001" name="Proc. Natl. Acad. Sci. U.S.A.">
        <title>The complete genome of the crenarchaeon Sulfolobus solfataricus P2.</title>
        <authorList>
            <person name="She Q."/>
            <person name="Singh R.K."/>
            <person name="Confalonieri F."/>
            <person name="Zivanovic Y."/>
            <person name="Allard G."/>
            <person name="Awayez M.J."/>
            <person name="Chan-Weiher C.C.-Y."/>
            <person name="Clausen I.G."/>
            <person name="Curtis B.A."/>
            <person name="De Moors A."/>
            <person name="Erauso G."/>
            <person name="Fletcher C."/>
            <person name="Gordon P.M.K."/>
            <person name="Heikamp-de Jong I."/>
            <person name="Jeffries A.C."/>
            <person name="Kozera C.J."/>
            <person name="Medina N."/>
            <person name="Peng X."/>
            <person name="Thi-Ngoc H.P."/>
            <person name="Redder P."/>
            <person name="Schenk M.E."/>
            <person name="Theriault C."/>
            <person name="Tolstrup N."/>
            <person name="Charlebois R.L."/>
            <person name="Doolittle W.F."/>
            <person name="Duguet M."/>
            <person name="Gaasterland T."/>
            <person name="Garrett R.A."/>
            <person name="Ragan M.A."/>
            <person name="Sensen C.W."/>
            <person name="Van der Oost J."/>
        </authorList>
    </citation>
    <scope>NUCLEOTIDE SEQUENCE [LARGE SCALE GENOMIC DNA]</scope>
    <source>
        <strain>ATCC 35092 / DSM 1617 / JCM 11322 / P2</strain>
    </source>
</reference>
<organism>
    <name type="scientific">Saccharolobus solfataricus (strain ATCC 35092 / DSM 1617 / JCM 11322 / P2)</name>
    <name type="common">Sulfolobus solfataricus</name>
    <dbReference type="NCBI Taxonomy" id="273057"/>
    <lineage>
        <taxon>Archaea</taxon>
        <taxon>Thermoproteota</taxon>
        <taxon>Thermoprotei</taxon>
        <taxon>Sulfolobales</taxon>
        <taxon>Sulfolobaceae</taxon>
        <taxon>Saccharolobus</taxon>
    </lineage>
</organism>
<feature type="chain" id="PRO_0000149082" description="Small ribosomal subunit protein eS27">
    <location>
        <begin position="1"/>
        <end position="66"/>
    </location>
</feature>
<feature type="zinc finger region" description="C4-type" evidence="1">
    <location>
        <begin position="21"/>
        <end position="43"/>
    </location>
</feature>
<feature type="binding site" evidence="1">
    <location>
        <position position="21"/>
    </location>
    <ligand>
        <name>Zn(2+)</name>
        <dbReference type="ChEBI" id="CHEBI:29105"/>
    </ligand>
</feature>
<feature type="binding site" evidence="1">
    <location>
        <position position="24"/>
    </location>
    <ligand>
        <name>Zn(2+)</name>
        <dbReference type="ChEBI" id="CHEBI:29105"/>
    </ligand>
</feature>
<feature type="binding site" evidence="1">
    <location>
        <position position="40"/>
    </location>
    <ligand>
        <name>Zn(2+)</name>
        <dbReference type="ChEBI" id="CHEBI:29105"/>
    </ligand>
</feature>
<feature type="binding site" evidence="1">
    <location>
        <position position="43"/>
    </location>
    <ligand>
        <name>Zn(2+)</name>
        <dbReference type="ChEBI" id="CHEBI:29105"/>
    </ligand>
</feature>
<accession>Q97Z80</accession>
<comment type="cofactor">
    <cofactor evidence="1">
        <name>Zn(2+)</name>
        <dbReference type="ChEBI" id="CHEBI:29105"/>
    </cofactor>
    <text evidence="1">Binds 1 zinc ion per subunit.</text>
</comment>
<comment type="subunit">
    <text evidence="1">Part of the 30S ribosomal subunit.</text>
</comment>
<comment type="similarity">
    <text evidence="1">Belongs to the eukaryotic ribosomal protein eS27 family.</text>
</comment>
<dbReference type="EMBL" id="AE006641">
    <property type="protein sequence ID" value="AAK41313.1"/>
    <property type="molecule type" value="Genomic_DNA"/>
</dbReference>
<dbReference type="PIR" id="B90257">
    <property type="entry name" value="B90257"/>
</dbReference>
<dbReference type="PDB" id="9FHL">
    <property type="method" value="EM"/>
    <property type="resolution" value="2.50 A"/>
    <property type="chains" value="W=1-66"/>
</dbReference>
<dbReference type="PDB" id="9FRA">
    <property type="method" value="EM"/>
    <property type="resolution" value="2.80 A"/>
    <property type="chains" value="W=1-66"/>
</dbReference>
<dbReference type="PDB" id="9FRK">
    <property type="method" value="EM"/>
    <property type="resolution" value="3.00 A"/>
    <property type="chains" value="W=1-66"/>
</dbReference>
<dbReference type="PDB" id="9FRL">
    <property type="method" value="EM"/>
    <property type="resolution" value="2.97 A"/>
    <property type="chains" value="W=1-66"/>
</dbReference>
<dbReference type="PDB" id="9FS6">
    <property type="method" value="EM"/>
    <property type="resolution" value="2.90 A"/>
    <property type="chains" value="W=1-66"/>
</dbReference>
<dbReference type="PDB" id="9FS8">
    <property type="method" value="EM"/>
    <property type="resolution" value="3.70 A"/>
    <property type="chains" value="W=1-66"/>
</dbReference>
<dbReference type="PDB" id="9FSF">
    <property type="method" value="EM"/>
    <property type="resolution" value="2.80 A"/>
    <property type="chains" value="W=1-66"/>
</dbReference>
<dbReference type="PDB" id="9FY0">
    <property type="method" value="EM"/>
    <property type="resolution" value="2.90 A"/>
    <property type="chains" value="W=1-66"/>
</dbReference>
<dbReference type="PDBsum" id="9FHL"/>
<dbReference type="PDBsum" id="9FRA"/>
<dbReference type="PDBsum" id="9FRK"/>
<dbReference type="PDBsum" id="9FRL"/>
<dbReference type="PDBsum" id="9FS6"/>
<dbReference type="PDBsum" id="9FS8"/>
<dbReference type="PDBsum" id="9FSF"/>
<dbReference type="PDBsum" id="9FY0"/>
<dbReference type="EMDB" id="EMD-50445"/>
<dbReference type="EMDB" id="EMD-50709"/>
<dbReference type="EMDB" id="EMD-50716"/>
<dbReference type="EMDB" id="EMD-50717"/>
<dbReference type="EMDB" id="EMD-50724"/>
<dbReference type="EMDB" id="EMD-50725"/>
<dbReference type="EMDB" id="EMD-50727"/>
<dbReference type="EMDB" id="EMD-50854"/>
<dbReference type="SMR" id="Q97Z80"/>
<dbReference type="FunCoup" id="Q97Z80">
    <property type="interactions" value="207"/>
</dbReference>
<dbReference type="STRING" id="273057.SSO7114"/>
<dbReference type="PaxDb" id="273057-SSO7114"/>
<dbReference type="EnsemblBacteria" id="AAK41313">
    <property type="protein sequence ID" value="AAK41313"/>
    <property type="gene ID" value="SSO7114"/>
</dbReference>
<dbReference type="KEGG" id="sso:SSO7114"/>
<dbReference type="PATRIC" id="fig|273057.12.peg.1045"/>
<dbReference type="eggNOG" id="arCOG04108">
    <property type="taxonomic scope" value="Archaea"/>
</dbReference>
<dbReference type="HOGENOM" id="CLU_199465_0_0_2"/>
<dbReference type="InParanoid" id="Q97Z80"/>
<dbReference type="PhylomeDB" id="Q97Z80"/>
<dbReference type="Proteomes" id="UP000001974">
    <property type="component" value="Chromosome"/>
</dbReference>
<dbReference type="GO" id="GO:0022627">
    <property type="term" value="C:cytosolic small ribosomal subunit"/>
    <property type="evidence" value="ECO:0000318"/>
    <property type="project" value="GO_Central"/>
</dbReference>
<dbReference type="GO" id="GO:0003723">
    <property type="term" value="F:RNA binding"/>
    <property type="evidence" value="ECO:0000318"/>
    <property type="project" value="GO_Central"/>
</dbReference>
<dbReference type="GO" id="GO:0003735">
    <property type="term" value="F:structural constituent of ribosome"/>
    <property type="evidence" value="ECO:0000318"/>
    <property type="project" value="GO_Central"/>
</dbReference>
<dbReference type="GO" id="GO:0008270">
    <property type="term" value="F:zinc ion binding"/>
    <property type="evidence" value="ECO:0007669"/>
    <property type="project" value="UniProtKB-UniRule"/>
</dbReference>
<dbReference type="GO" id="GO:0000028">
    <property type="term" value="P:ribosomal small subunit assembly"/>
    <property type="evidence" value="ECO:0000318"/>
    <property type="project" value="GO_Central"/>
</dbReference>
<dbReference type="GO" id="GO:0006412">
    <property type="term" value="P:translation"/>
    <property type="evidence" value="ECO:0007669"/>
    <property type="project" value="UniProtKB-UniRule"/>
</dbReference>
<dbReference type="Gene3D" id="2.20.25.100">
    <property type="entry name" value="Zn-binding ribosomal proteins"/>
    <property type="match status" value="1"/>
</dbReference>
<dbReference type="HAMAP" id="MF_00371">
    <property type="entry name" value="Ribosomal_eS27"/>
    <property type="match status" value="1"/>
</dbReference>
<dbReference type="InterPro" id="IPR000592">
    <property type="entry name" value="Ribosomal_eS27"/>
</dbReference>
<dbReference type="InterPro" id="IPR023407">
    <property type="entry name" value="Ribosomal_eS27_Zn-bd_dom_sf"/>
</dbReference>
<dbReference type="InterPro" id="IPR011332">
    <property type="entry name" value="Ribosomal_zn-bd"/>
</dbReference>
<dbReference type="NCBIfam" id="NF001629">
    <property type="entry name" value="PRK00415.1"/>
    <property type="match status" value="1"/>
</dbReference>
<dbReference type="PANTHER" id="PTHR11594">
    <property type="entry name" value="40S RIBOSOMAL PROTEIN S27"/>
    <property type="match status" value="1"/>
</dbReference>
<dbReference type="Pfam" id="PF01667">
    <property type="entry name" value="Ribosomal_S27e"/>
    <property type="match status" value="1"/>
</dbReference>
<dbReference type="SUPFAM" id="SSF57829">
    <property type="entry name" value="Zn-binding ribosomal proteins"/>
    <property type="match status" value="1"/>
</dbReference>
<dbReference type="PROSITE" id="PS01168">
    <property type="entry name" value="RIBOSOMAL_S27E"/>
    <property type="match status" value="1"/>
</dbReference>
<proteinExistence type="evidence at protein level"/>
<gene>
    <name evidence="1" type="primary">rps27e</name>
    <name type="ordered locus">SSO7114</name>
</gene>
<name>RS27_SACS2</name>
<evidence type="ECO:0000255" key="1">
    <source>
        <dbReference type="HAMAP-Rule" id="MF_00371"/>
    </source>
</evidence>
<protein>
    <recommendedName>
        <fullName evidence="1">Small ribosomal subunit protein eS27</fullName>
    </recommendedName>
</protein>
<sequence length="66" mass="7385">MMRKLRVLIPEPKSRFLRVKCPNCGNEQTIFSHATFPVRCLSCGTELVYSMGGKAKIVGEVVRIMG</sequence>